<name>TR101_FUSSP</name>
<proteinExistence type="evidence at protein level"/>
<protein>
    <recommendedName>
        <fullName evidence="14">Trichothecene 3-O-acetyltransferase TRI101</fullName>
        <ecNumber evidence="16">2.3.1.-</ecNumber>
    </recommendedName>
    <alternativeName>
        <fullName evidence="14">Trichothecene biosynthesis protein 101</fullName>
    </alternativeName>
</protein>
<evidence type="ECO:0000269" key="1">
    <source>
    </source>
</evidence>
<evidence type="ECO:0000269" key="2">
    <source>
    </source>
</evidence>
<evidence type="ECO:0000269" key="3">
    <source>
    </source>
</evidence>
<evidence type="ECO:0000269" key="4">
    <source>
    </source>
</evidence>
<evidence type="ECO:0000269" key="5">
    <source>
    </source>
</evidence>
<evidence type="ECO:0000269" key="6">
    <source>
    </source>
</evidence>
<evidence type="ECO:0000269" key="7">
    <source>
    </source>
</evidence>
<evidence type="ECO:0000269" key="8">
    <source>
    </source>
</evidence>
<evidence type="ECO:0000269" key="9">
    <source>
    </source>
</evidence>
<evidence type="ECO:0000269" key="10">
    <source>
    </source>
</evidence>
<evidence type="ECO:0000269" key="11">
    <source>
    </source>
</evidence>
<evidence type="ECO:0000269" key="12">
    <source>
    </source>
</evidence>
<evidence type="ECO:0000269" key="13">
    <source>
    </source>
</evidence>
<evidence type="ECO:0000303" key="14">
    <source>
    </source>
</evidence>
<evidence type="ECO:0000305" key="15"/>
<evidence type="ECO:0000305" key="16">
    <source>
    </source>
</evidence>
<evidence type="ECO:0007744" key="17">
    <source>
        <dbReference type="PDB" id="2ZBA"/>
    </source>
</evidence>
<evidence type="ECO:0007829" key="18">
    <source>
        <dbReference type="PDB" id="2ZBA"/>
    </source>
</evidence>
<organism>
    <name type="scientific">Fusarium sporotrichioides</name>
    <dbReference type="NCBI Taxonomy" id="5514"/>
    <lineage>
        <taxon>Eukaryota</taxon>
        <taxon>Fungi</taxon>
        <taxon>Dikarya</taxon>
        <taxon>Ascomycota</taxon>
        <taxon>Pezizomycotina</taxon>
        <taxon>Sordariomycetes</taxon>
        <taxon>Hypocreomycetidae</taxon>
        <taxon>Hypocreales</taxon>
        <taxon>Nectriaceae</taxon>
        <taxon>Fusarium</taxon>
    </lineage>
</organism>
<reference key="1">
    <citation type="journal article" date="1999" name="Appl. Environ. Microbiol.">
        <title>Disruption of TRI101, the gene encoding trichothecene 3-O-acetyltransferase, from Fusarium sporotrichioides.</title>
        <authorList>
            <person name="McCormick S.P."/>
            <person name="Alexander N.J."/>
            <person name="Trapp S.E."/>
            <person name="Hohn T.M."/>
        </authorList>
    </citation>
    <scope>NUCLEOTIDE SEQUENCE [GENOMIC DNA]</scope>
    <scope>FUNCTION</scope>
    <scope>DISRUPTION PHENOTYPE</scope>
    <scope>PATHWAY</scope>
    <source>
        <strain>ATCC 24631 / NRRL 3299</strain>
    </source>
</reference>
<reference key="2">
    <citation type="journal article" date="1996" name="Appl. Environ. Microbiol.">
        <title>Isolation and characterization of Tri3, a gene encoding 15-O-acetyltransferase from Fusarium sporotrichioides.</title>
        <authorList>
            <person name="McCormick S.P."/>
            <person name="Hohn T.M."/>
            <person name="Desjardins A.E."/>
        </authorList>
    </citation>
    <scope>FUNCTION</scope>
</reference>
<reference key="3">
    <citation type="journal article" date="2001" name="Fungal Genet. Biol.">
        <title>A genetic and biochemical approach to study trichothecene diversity in Fusarium sporotrichioides and Fusarium graminearum.</title>
        <authorList>
            <person name="Brown D.W."/>
            <person name="McCormick S.P."/>
            <person name="Alexander N.J."/>
            <person name="Proctor R.H."/>
            <person name="Desjardins A.E."/>
        </authorList>
    </citation>
    <scope>FUNCTION</scope>
    <source>
        <strain>ATCC 24631 / NRRL 3299</strain>
    </source>
</reference>
<reference key="4">
    <citation type="journal article" date="1986" name="Arch. Biochem. Biophys.">
        <title>Purification and characterization of the sesquiterpene cyclase trichodiene synthetase from Fusarium sporotrichioides.</title>
        <authorList>
            <person name="Hohn T.M."/>
            <person name="Vanmiddlesworth F."/>
        </authorList>
    </citation>
    <scope>FUNCTION</scope>
</reference>
<reference key="5">
    <citation type="journal article" date="1990" name="Appl. Environ. Microbiol.">
        <title>Bioconversion of possible T-2 toxin precursors by a mutant strain of Fusarium sporotrichioides NRRL 3299.</title>
        <authorList>
            <person name="McCormick S.P."/>
            <person name="Taylor S.L."/>
            <person name="Plattner R.D."/>
            <person name="Beremand M.N."/>
        </authorList>
    </citation>
    <scope>FUNCTION</scope>
</reference>
<reference key="6">
    <citation type="journal article" date="1995" name="Mol. Gen. Genet.">
        <title>The Tri4 gene of Fusarium sporotrichioides encodes a cytochrome P450 monooxygenase involved in trichothecene biosynthesis.</title>
        <authorList>
            <person name="Hohn T.M."/>
            <person name="Desjardins A.E."/>
            <person name="McCormick S.P."/>
        </authorList>
    </citation>
    <scope>FUNCTION</scope>
</reference>
<reference key="7">
    <citation type="journal article" date="1998" name="Appl. Environ. Microbiol.">
        <title>The TRI11 gene of Fusarium sporotrichioides encodes a cytochrome P-450 monooxygenase required for C-15 hydroxylation in trichothecene biosynthesis.</title>
        <authorList>
            <person name="Alexander N.J."/>
            <person name="Hohn T.M."/>
            <person name="McCormick S.P."/>
        </authorList>
    </citation>
    <scope>FUNCTION</scope>
</reference>
<reference key="8">
    <citation type="journal article" date="2002" name="Appl. Environ. Microbiol.">
        <title>Fusarium Tri8 encodes a trichothecene C-3 esterase.</title>
        <authorList>
            <person name="McCormick S.P."/>
            <person name="Alexander N.J."/>
        </authorList>
    </citation>
    <scope>FUNCTION</scope>
</reference>
<reference key="9">
    <citation type="journal article" date="2002" name="Fungal Genet. Biol.">
        <title>Inactivation of a cytochrome P-450 is a determinant of trichothecene diversity in Fusarium species.</title>
        <authorList>
            <person name="Brown D.W."/>
            <person name="McCormick S.P."/>
            <person name="Alexander N.J."/>
            <person name="Proctor R.H."/>
            <person name="Desjardins A.E."/>
        </authorList>
    </citation>
    <scope>FUNCTION</scope>
</reference>
<reference key="10">
    <citation type="journal article" date="2003" name="Appl. Environ. Microbiol.">
        <title>Tri1 encodes the cytochrome P450 monooxygenase for C-8 hydroxylation during trichothecene biosynthesis in Fusarium sporotrichioides and resides upstream of another new Tri gene.</title>
        <authorList>
            <person name="Meek I.B."/>
            <person name="Peplow A.W."/>
            <person name="Ake C. Jr."/>
            <person name="Phillips T.D."/>
            <person name="Beremand M.N."/>
        </authorList>
    </citation>
    <scope>FUNCTION</scope>
</reference>
<reference key="11">
    <citation type="journal article" date="2003" name="Appl. Environ. Microbiol.">
        <title>Identification of new genes positively regulated by Tri10 and a regulatory network for trichothecene mycotoxin production.</title>
        <authorList>
            <person name="Peplow A.W."/>
            <person name="Tag A.G."/>
            <person name="Garifullina G.F."/>
            <person name="Beremand M.N."/>
        </authorList>
    </citation>
    <scope>INDUCTION</scope>
</reference>
<reference key="12">
    <citation type="journal article" date="2003" name="Appl. Environ. Microbiol.">
        <title>Tri16 is required for esterification of position C-8 during trichothecene mycotoxin production by Fusarium sporotrichioides.</title>
        <authorList>
            <person name="Peplow A.W."/>
            <person name="Meek I.B."/>
            <person name="Wiles M.C."/>
            <person name="Phillips T.D."/>
            <person name="Beremand M.N."/>
        </authorList>
    </citation>
    <scope>FUNCTION</scope>
</reference>
<reference key="13">
    <citation type="journal article" date="2006" name="Can. J. Microbiol.">
        <title>Fusarium Tri4 encodes a multifunctional oxygenase required for trichothecene biosynthesis.</title>
        <authorList>
            <person name="McCormick S.P."/>
            <person name="Alexander N.J."/>
            <person name="Proctor R.H."/>
        </authorList>
    </citation>
    <scope>FUNCTION</scope>
</reference>
<reference key="14">
    <citation type="journal article" date="2008" name="J. Biol. Chem.">
        <title>Structural and functional characterization of the TRI101 trichothecene 3-O-acetyltransferase from Fusarium sporotrichioides and Fusarium graminearum: kinetic insights to combating Fusarium head blight.</title>
        <authorList>
            <person name="Garvey G.S."/>
            <person name="McCormick S.P."/>
            <person name="Rayment I."/>
        </authorList>
    </citation>
    <scope>X-RAY CRYSTALLOGRAPHY (2.00 ANGSTROMS) IN COMPLEX WITH CALCIUM AND COENZYME A</scope>
    <scope>FUNCTION</scope>
    <scope>CATALYTIC ACTIVITY</scope>
    <scope>BIOPHYSICOCHEMICAL PROPERTIES</scope>
</reference>
<feature type="chain" id="PRO_0000442376" description="Trichothecene 3-O-acetyltransferase TRI101">
    <location>
        <begin position="1"/>
        <end position="459"/>
    </location>
</feature>
<feature type="binding site" evidence="8 17">
    <location>
        <position position="218"/>
    </location>
    <ligand>
        <name>Ca(2+)</name>
        <dbReference type="ChEBI" id="CHEBI:29108"/>
    </ligand>
</feature>
<feature type="binding site" evidence="8 17">
    <location>
        <position position="221"/>
    </location>
    <ligand>
        <name>Ca(2+)</name>
        <dbReference type="ChEBI" id="CHEBI:29108"/>
    </ligand>
</feature>
<feature type="binding site" evidence="8 17">
    <location>
        <position position="253"/>
    </location>
    <ligand>
        <name>CoA</name>
        <dbReference type="ChEBI" id="CHEBI:57287"/>
    </ligand>
</feature>
<feature type="binding site" evidence="17">
    <location>
        <begin position="266"/>
        <end position="269"/>
    </location>
    <ligand>
        <name>CoA</name>
        <dbReference type="ChEBI" id="CHEBI:57287"/>
    </ligand>
</feature>
<feature type="binding site" evidence="8 17">
    <location>
        <position position="302"/>
    </location>
    <ligand>
        <name>CoA</name>
        <dbReference type="ChEBI" id="CHEBI:57287"/>
    </ligand>
</feature>
<feature type="binding site" evidence="8 17">
    <location>
        <position position="318"/>
    </location>
    <ligand>
        <name>CoA</name>
        <dbReference type="ChEBI" id="CHEBI:57287"/>
    </ligand>
</feature>
<feature type="binding site" evidence="8 17">
    <location>
        <position position="343"/>
    </location>
    <ligand>
        <name>CoA</name>
        <dbReference type="ChEBI" id="CHEBI:57287"/>
    </ligand>
</feature>
<feature type="binding site" evidence="8 17">
    <location>
        <position position="376"/>
    </location>
    <ligand>
        <name>Ca(2+)</name>
        <dbReference type="ChEBI" id="CHEBI:29108"/>
    </ligand>
</feature>
<feature type="binding site" evidence="8 17">
    <location>
        <position position="386"/>
    </location>
    <ligand>
        <name>CoA</name>
        <dbReference type="ChEBI" id="CHEBI:57287"/>
    </ligand>
</feature>
<feature type="binding site" evidence="8 17">
    <location>
        <position position="390"/>
    </location>
    <ligand>
        <name>CoA</name>
        <dbReference type="ChEBI" id="CHEBI:57287"/>
    </ligand>
</feature>
<feature type="binding site" evidence="8 17">
    <location>
        <position position="449"/>
    </location>
    <ligand>
        <name>Ca(2+)</name>
        <dbReference type="ChEBI" id="CHEBI:29108"/>
    </ligand>
</feature>
<feature type="helix" evidence="18">
    <location>
        <begin position="18"/>
        <end position="21"/>
    </location>
</feature>
<feature type="helix" evidence="18">
    <location>
        <begin position="23"/>
        <end position="26"/>
    </location>
</feature>
<feature type="strand" evidence="18">
    <location>
        <begin position="28"/>
        <end position="37"/>
    </location>
</feature>
<feature type="helix" evidence="18">
    <location>
        <begin position="41"/>
        <end position="43"/>
    </location>
</feature>
<feature type="helix" evidence="18">
    <location>
        <begin position="44"/>
        <end position="61"/>
    </location>
</feature>
<feature type="helix" evidence="18">
    <location>
        <begin position="63"/>
        <end position="66"/>
    </location>
</feature>
<feature type="strand" evidence="18">
    <location>
        <begin position="68"/>
        <end position="72"/>
    </location>
</feature>
<feature type="strand" evidence="18">
    <location>
        <begin position="81"/>
        <end position="85"/>
    </location>
</feature>
<feature type="strand" evidence="18">
    <location>
        <begin position="92"/>
        <end position="97"/>
    </location>
</feature>
<feature type="helix" evidence="18">
    <location>
        <begin position="107"/>
        <end position="113"/>
    </location>
</feature>
<feature type="helix" evidence="18">
    <location>
        <begin position="117"/>
        <end position="119"/>
    </location>
</feature>
<feature type="helix" evidence="18">
    <location>
        <begin position="122"/>
        <end position="125"/>
    </location>
</feature>
<feature type="strand" evidence="18">
    <location>
        <begin position="144"/>
        <end position="153"/>
    </location>
</feature>
<feature type="strand" evidence="18">
    <location>
        <begin position="156"/>
        <end position="164"/>
    </location>
</feature>
<feature type="turn" evidence="18">
    <location>
        <begin position="165"/>
        <end position="167"/>
    </location>
</feature>
<feature type="helix" evidence="18">
    <location>
        <begin position="170"/>
        <end position="184"/>
    </location>
</feature>
<feature type="helix" evidence="18">
    <location>
        <begin position="191"/>
        <end position="197"/>
    </location>
</feature>
<feature type="turn" evidence="18">
    <location>
        <begin position="201"/>
        <end position="203"/>
    </location>
</feature>
<feature type="helix" evidence="18">
    <location>
        <begin position="215"/>
        <end position="220"/>
    </location>
</feature>
<feature type="strand" evidence="18">
    <location>
        <begin position="237"/>
        <end position="244"/>
    </location>
</feature>
<feature type="helix" evidence="18">
    <location>
        <begin position="246"/>
        <end position="257"/>
    </location>
</feature>
<feature type="helix" evidence="18">
    <location>
        <begin position="269"/>
        <end position="285"/>
    </location>
</feature>
<feature type="turn" evidence="18">
    <location>
        <begin position="286"/>
        <end position="288"/>
    </location>
</feature>
<feature type="strand" evidence="18">
    <location>
        <begin position="294"/>
        <end position="302"/>
    </location>
</feature>
<feature type="helix" evidence="18">
    <location>
        <begin position="304"/>
        <end position="307"/>
    </location>
</feature>
<feature type="strand" evidence="18">
    <location>
        <begin position="318"/>
        <end position="326"/>
    </location>
</feature>
<feature type="helix" evidence="18">
    <location>
        <begin position="327"/>
        <end position="332"/>
    </location>
</feature>
<feature type="helix" evidence="18">
    <location>
        <begin position="335"/>
        <end position="344"/>
    </location>
</feature>
<feature type="helix" evidence="18">
    <location>
        <begin position="348"/>
        <end position="363"/>
    </location>
</feature>
<feature type="turn" evidence="18">
    <location>
        <begin position="373"/>
        <end position="376"/>
    </location>
</feature>
<feature type="turn" evidence="18">
    <location>
        <begin position="379"/>
        <end position="381"/>
    </location>
</feature>
<feature type="strand" evidence="18">
    <location>
        <begin position="383"/>
        <end position="387"/>
    </location>
</feature>
<feature type="helix" evidence="18">
    <location>
        <begin position="393"/>
        <end position="395"/>
    </location>
</feature>
<feature type="strand" evidence="18">
    <location>
        <begin position="406"/>
        <end position="409"/>
    </location>
</feature>
<feature type="strand" evidence="18">
    <location>
        <begin position="419"/>
        <end position="422"/>
    </location>
</feature>
<feature type="strand" evidence="18">
    <location>
        <begin position="431"/>
        <end position="438"/>
    </location>
</feature>
<feature type="helix" evidence="18">
    <location>
        <begin position="439"/>
        <end position="446"/>
    </location>
</feature>
<feature type="helix" evidence="18">
    <location>
        <begin position="449"/>
        <end position="454"/>
    </location>
</feature>
<feature type="strand" evidence="18">
    <location>
        <begin position="456"/>
        <end position="459"/>
    </location>
</feature>
<keyword id="KW-0002">3D-structure</keyword>
<keyword id="KW-0106">Calcium</keyword>
<keyword id="KW-0479">Metal-binding</keyword>
<keyword id="KW-0808">Transferase</keyword>
<dbReference type="EC" id="2.3.1.-" evidence="16"/>
<dbReference type="EMBL" id="AF127176">
    <property type="protein sequence ID" value="AAD19745.1"/>
    <property type="molecule type" value="Genomic_DNA"/>
</dbReference>
<dbReference type="PDB" id="2ZBA">
    <property type="method" value="X-ray"/>
    <property type="resolution" value="2.00 A"/>
    <property type="chains" value="A/B/C/D=1-459"/>
</dbReference>
<dbReference type="PDBsum" id="2ZBA"/>
<dbReference type="SMR" id="O94197"/>
<dbReference type="BioCyc" id="MetaCyc:MONOMER-19578"/>
<dbReference type="UniPathway" id="UPA00267"/>
<dbReference type="EvolutionaryTrace" id="O94197"/>
<dbReference type="GO" id="GO:0046872">
    <property type="term" value="F:metal ion binding"/>
    <property type="evidence" value="ECO:0007669"/>
    <property type="project" value="UniProtKB-KW"/>
</dbReference>
<dbReference type="GO" id="GO:0016740">
    <property type="term" value="F:transferase activity"/>
    <property type="evidence" value="ECO:0007669"/>
    <property type="project" value="UniProtKB-KW"/>
</dbReference>
<dbReference type="Gene3D" id="3.30.559.10">
    <property type="entry name" value="Chloramphenicol acetyltransferase-like domain"/>
    <property type="match status" value="2"/>
</dbReference>
<dbReference type="InterPro" id="IPR023213">
    <property type="entry name" value="CAT-like_dom_sf"/>
</dbReference>
<dbReference type="InterPro" id="IPR051283">
    <property type="entry name" value="Sec_Metabolite_Acyltrans"/>
</dbReference>
<dbReference type="InterPro" id="IPR054710">
    <property type="entry name" value="Tri101-like_N"/>
</dbReference>
<dbReference type="PANTHER" id="PTHR31896">
    <property type="entry name" value="FAMILY REGULATORY PROTEIN, PUTATIVE (AFU_ORTHOLOGUE AFUA_3G14730)-RELATED"/>
    <property type="match status" value="1"/>
</dbReference>
<dbReference type="PANTHER" id="PTHR31896:SF64">
    <property type="entry name" value="TRICHOTHECENE 3-O-ACETYLTRANSFERASE"/>
    <property type="match status" value="1"/>
</dbReference>
<dbReference type="Pfam" id="PF22664">
    <property type="entry name" value="TRI-like_N"/>
    <property type="match status" value="1"/>
</dbReference>
<sequence length="459" mass="50336">MAATSSTSSQSFDIELDIIGQQPPLLSIYTQISLVYPVSDPSQYPTIVSTLEEGLKRLSQTFPWVAGQVKTEGISEGNTGTSKIIPYEETPRLVVKDLRDDSSAPTIEGLRKAGFPLEMFDENVVAPRKTLAIGPGNGPNDPKPVLLLQLNFIKGGLILTVNGQHGAMDMTGQDAIIRLLSKACRNESFTEEEISAMNLDRKTVVPLLENYKVGPELDHQIAKPAPAGDAPPAPAKATWAFFSFTPKALSELKDAATKTLDASSKFVSTDDALSAFIWQSTSRVRLARLDASTPTEFCRAVDMRGPMGVSSTYPGLLQNMTYHDSTVAEIANEPLGATASRLRSELNSDRLRRRTQALATYMHGLPDKSSVSLTADANPSSSIMLSSWAKVGCWEYDFGFGLGKPESVRRPRFEPFESLMYFMPKKPDGEFTASISLRDEDMERLKADEEWTKYAKYIG</sequence>
<gene>
    <name evidence="14" type="primary">TRI101</name>
</gene>
<comment type="function">
    <text evidence="1 2 3 4 5 6 7 9 10 11 12 13">3-O-acetyltransferase involved in the biosynthesis of trichothecenes, a very large family of chemically related bicyclic sesquiterpene compounds acting as mycotoxins, including T2-toxin (PubMed:11352533, PubMed:17923480). The biosynthesis of trichothecenes begins with the cyclization of farnesyl diphosphate to trichodiene and is catalyzed by the trichodiene synthase TRI5 (PubMed:10583973, PubMed:3800398). Trichodiene undergoes a series of oxygenations catalyzed by the cytochrome P450 monooxygenase TRI4 (PubMed:7651333). TRI4 controls the addition of four oxygens at C-2, C-3, C-11, and the C-12, C-13-epoxide to form the intermediate isotrichotriol (PubMed:16917519). Isotrichotriol then undergoes a non-enzymatic isomerization and cyclization to form isotrichodermol (PubMed:2317042). During this process, the oxygen at the C-2 position becomes the pyran ring oxygen and the hydroxyl group at C-11 is lost (PubMed:2317042). More complex type A trichothecenes are built by modifying isotrichodermol through a series of paired hydroxylation and acetylation or acylation steps (PubMed:11352533). Isotrichodermol is converted to isotrichodermin by the acetyltransferase TRI101 (PubMed:10583973). TRI101 encodes a C-3 transacetylase that acts as a self-protection or resistance factor during biosynthesis and that the presence of a free C-3 hydroxyl group is a key component of Fusarium trichothecene phytotoxicity (PubMed:10583973). A second hydroxyl group is added to C-15 by the trichothecene C-15 hydroxylase TRI11, producing 15-decalonectrin, which is then acetylated by TRI3, producing calonectrin (PubMed:8593041, PubMed:9435078). A third hydroxyl group is added at C-4 by the cytochrome P450 monooxygenase TRI13, converting calonectrin to 3,15-diacetoxyspirpenol, which is subsequently acetylated bythe acetyltransferase TRI7 (PubMed:11352533, PubMed:12135578). A fourth hydroxyl group is added to C-8 by the cytochrome P450 monooxygenase TRI1, followed by the addition of an isovaleryl moiety by TRI16 (PubMed:12620849, PubMed:14532047). Finally, the acetyl group is removed from the C-3 position by the trichothecene C-3 esterase TRI8 to produce T-2 toxin (PubMed:12039755).</text>
</comment>
<comment type="biophysicochemical properties">
    <kinetics>
        <KM evidence="8">17.1 uM for isotrichodermol</KM>
        <KM evidence="8">15.8 uM for T2-toxin</KM>
        <KM evidence="8">1463 uM for deoxynivalenol (DON)</KM>
        <KM evidence="8">350 uM for nivalenol (NIV)</KM>
    </kinetics>
</comment>
<comment type="pathway">
    <text evidence="1">Sesquiterpene biosynthesis; trichothecene biosynthesis.</text>
</comment>
<comment type="disruption phenotype">
    <text evidence="1">Impairs the production of T-2 toxin and accumulates isotrichodermol and small amounts of 3,15-didecalonectrin and 3-decalonectrin (PubMed:10583973).</text>
</comment>
<comment type="miscellaneous">
    <text evidence="15">Trichothecenes are sesquiterpenoid toxins that act by inhibiting protein biosynthesis.</text>
</comment>
<comment type="similarity">
    <text evidence="15">Belongs to the trichothecene 3-O-acetyltransferase family.</text>
</comment>
<accession>O94197</accession>